<name>RS11_MAIZE</name>
<reference key="1">
    <citation type="journal article" date="1991" name="Plant Mol. Biol.">
        <title>Nucleotide sequence and characterization of a maize cytoplasmic ribosomal protein S11 cDNA.</title>
        <authorList>
            <person name="Lebrun M."/>
            <person name="Freyssinet G."/>
        </authorList>
    </citation>
    <scope>NUCLEOTIDE SEQUENCE [MRNA]</scope>
    <source>
        <strain>cv. Wisconsin 22</strain>
        <tissue>Seedling</tissue>
    </source>
</reference>
<comment type="subcellular location">
    <subcellularLocation>
        <location>Cytoplasm</location>
    </subcellularLocation>
</comment>
<comment type="similarity">
    <text evidence="1">Belongs to the universal ribosomal protein uS17 family.</text>
</comment>
<dbReference type="EMBL" id="X55967">
    <property type="protein sequence ID" value="CAA39438.1"/>
    <property type="molecule type" value="mRNA"/>
</dbReference>
<dbReference type="PIR" id="S16577">
    <property type="entry name" value="S16577"/>
</dbReference>
<dbReference type="RefSeq" id="NP_001105562.1">
    <property type="nucleotide sequence ID" value="NM_001112092.1"/>
</dbReference>
<dbReference type="RefSeq" id="XP_008668895.1">
    <property type="nucleotide sequence ID" value="XM_008670673.1"/>
</dbReference>
<dbReference type="SMR" id="P25460"/>
<dbReference type="FunCoup" id="P25460">
    <property type="interactions" value="2497"/>
</dbReference>
<dbReference type="STRING" id="4577.P25460"/>
<dbReference type="PaxDb" id="4577-GRMZM2G019325_P01"/>
<dbReference type="EnsemblPlants" id="Zm00001eb070950_T001">
    <property type="protein sequence ID" value="Zm00001eb070950_P001"/>
    <property type="gene ID" value="Zm00001eb070950"/>
</dbReference>
<dbReference type="EnsemblPlants" id="Zm00001eb430770_T001">
    <property type="protein sequence ID" value="Zm00001eb430770_P001"/>
    <property type="gene ID" value="Zm00001eb430770"/>
</dbReference>
<dbReference type="GeneID" id="542552"/>
<dbReference type="Gramene" id="Zm00001eb070950_T001">
    <property type="protein sequence ID" value="Zm00001eb070950_P001"/>
    <property type="gene ID" value="Zm00001eb070950"/>
</dbReference>
<dbReference type="Gramene" id="Zm00001eb430770_T001">
    <property type="protein sequence ID" value="Zm00001eb430770_P001"/>
    <property type="gene ID" value="Zm00001eb430770"/>
</dbReference>
<dbReference type="KEGG" id="zma:110485086"/>
<dbReference type="KEGG" id="zma:542552"/>
<dbReference type="MaizeGDB" id="69569"/>
<dbReference type="eggNOG" id="KOG1728">
    <property type="taxonomic scope" value="Eukaryota"/>
</dbReference>
<dbReference type="HOGENOM" id="CLU_073626_0_2_1"/>
<dbReference type="InParanoid" id="P25460"/>
<dbReference type="OrthoDB" id="1890621at2759"/>
<dbReference type="Proteomes" id="UP000007305">
    <property type="component" value="Chromosome 10"/>
</dbReference>
<dbReference type="Proteomes" id="UP000007305">
    <property type="component" value="Chromosome 2"/>
</dbReference>
<dbReference type="ExpressionAtlas" id="P25460">
    <property type="expression patterns" value="baseline and differential"/>
</dbReference>
<dbReference type="GO" id="GO:0022627">
    <property type="term" value="C:cytosolic small ribosomal subunit"/>
    <property type="evidence" value="ECO:0000318"/>
    <property type="project" value="GO_Central"/>
</dbReference>
<dbReference type="GO" id="GO:0019843">
    <property type="term" value="F:rRNA binding"/>
    <property type="evidence" value="ECO:0007669"/>
    <property type="project" value="UniProtKB-KW"/>
</dbReference>
<dbReference type="GO" id="GO:0003735">
    <property type="term" value="F:structural constituent of ribosome"/>
    <property type="evidence" value="ECO:0000318"/>
    <property type="project" value="GO_Central"/>
</dbReference>
<dbReference type="GO" id="GO:0006412">
    <property type="term" value="P:translation"/>
    <property type="evidence" value="ECO:0007669"/>
    <property type="project" value="InterPro"/>
</dbReference>
<dbReference type="CDD" id="cd00364">
    <property type="entry name" value="Ribosomal_uS17"/>
    <property type="match status" value="1"/>
</dbReference>
<dbReference type="FunFam" id="2.40.50.1000:FF:000003">
    <property type="entry name" value="40S ribosomal protein S11"/>
    <property type="match status" value="1"/>
</dbReference>
<dbReference type="Gene3D" id="2.40.50.1000">
    <property type="match status" value="1"/>
</dbReference>
<dbReference type="InterPro" id="IPR012340">
    <property type="entry name" value="NA-bd_OB-fold"/>
</dbReference>
<dbReference type="InterPro" id="IPR000266">
    <property type="entry name" value="Ribosomal_uS17"/>
</dbReference>
<dbReference type="InterPro" id="IPR028333">
    <property type="entry name" value="Ribosomal_uS17_arc/euk"/>
</dbReference>
<dbReference type="InterPro" id="IPR019979">
    <property type="entry name" value="Ribosomal_uS17_CS"/>
</dbReference>
<dbReference type="InterPro" id="IPR032440">
    <property type="entry name" value="Ribosomal_uS17_N"/>
</dbReference>
<dbReference type="NCBIfam" id="NF006345">
    <property type="entry name" value="PRK08572.1"/>
    <property type="match status" value="1"/>
</dbReference>
<dbReference type="NCBIfam" id="TIGR03630">
    <property type="entry name" value="uS17_arch"/>
    <property type="match status" value="1"/>
</dbReference>
<dbReference type="PANTHER" id="PTHR10744">
    <property type="entry name" value="40S RIBOSOMAL PROTEIN S11 FAMILY MEMBER"/>
    <property type="match status" value="1"/>
</dbReference>
<dbReference type="PANTHER" id="PTHR10744:SF22">
    <property type="entry name" value="SMALL RIBOSOMAL SUBUNIT PROTEIN US17"/>
    <property type="match status" value="1"/>
</dbReference>
<dbReference type="Pfam" id="PF00366">
    <property type="entry name" value="Ribosomal_S17"/>
    <property type="match status" value="1"/>
</dbReference>
<dbReference type="Pfam" id="PF16205">
    <property type="entry name" value="Ribosomal_S17_N"/>
    <property type="match status" value="1"/>
</dbReference>
<dbReference type="PRINTS" id="PR00973">
    <property type="entry name" value="RIBOSOMALS17"/>
</dbReference>
<dbReference type="SUPFAM" id="SSF50249">
    <property type="entry name" value="Nucleic acid-binding proteins"/>
    <property type="match status" value="1"/>
</dbReference>
<dbReference type="PROSITE" id="PS00056">
    <property type="entry name" value="RIBOSOMAL_S17"/>
    <property type="match status" value="1"/>
</dbReference>
<accession>P25460</accession>
<protein>
    <recommendedName>
        <fullName evidence="1">Small ribosomal subunit protein uS17</fullName>
    </recommendedName>
    <alternativeName>
        <fullName>40S ribosomal protein S11</fullName>
    </alternativeName>
</protein>
<keyword id="KW-0963">Cytoplasm</keyword>
<keyword id="KW-1185">Reference proteome</keyword>
<keyword id="KW-0687">Ribonucleoprotein</keyword>
<keyword id="KW-0689">Ribosomal protein</keyword>
<keyword id="KW-0694">RNA-binding</keyword>
<keyword id="KW-0699">rRNA-binding</keyword>
<sequence>MAEQTEKAFLKQPKVFLSSKKSGKGKKPGKGGNRFWKSIGLGFKTPREAIEGTYIDKKCPFTGTVSIRGRIIAGTCHSAKMNRTIIVRRNYLHFVKKYQRYEKRHSNIPAHISPCFRVKEGDHVIIGQCRPLSKTVRFNVVKVIPAGSAAAGKKAFTAA</sequence>
<organism>
    <name type="scientific">Zea mays</name>
    <name type="common">Maize</name>
    <dbReference type="NCBI Taxonomy" id="4577"/>
    <lineage>
        <taxon>Eukaryota</taxon>
        <taxon>Viridiplantae</taxon>
        <taxon>Streptophyta</taxon>
        <taxon>Embryophyta</taxon>
        <taxon>Tracheophyta</taxon>
        <taxon>Spermatophyta</taxon>
        <taxon>Magnoliopsida</taxon>
        <taxon>Liliopsida</taxon>
        <taxon>Poales</taxon>
        <taxon>Poaceae</taxon>
        <taxon>PACMAD clade</taxon>
        <taxon>Panicoideae</taxon>
        <taxon>Andropogonodae</taxon>
        <taxon>Andropogoneae</taxon>
        <taxon>Tripsacinae</taxon>
        <taxon>Zea</taxon>
    </lineage>
</organism>
<gene>
    <name type="primary">RPS11</name>
</gene>
<feature type="chain" id="PRO_0000128520" description="Small ribosomal subunit protein uS17">
    <location>
        <begin position="1"/>
        <end position="159"/>
    </location>
</feature>
<proteinExistence type="evidence at transcript level"/>
<evidence type="ECO:0000305" key="1"/>